<gene>
    <name type="primary">TTC39B</name>
    <name type="ORF">QtsA-17834</name>
    <name type="ORF">QtsA-18070</name>
</gene>
<protein>
    <recommendedName>
        <fullName>Tetratricopeptide repeat protein 39B</fullName>
        <shortName>TPR repeat protein 39B</shortName>
    </recommendedName>
</protein>
<evidence type="ECO:0000250" key="1">
    <source>
        <dbReference type="UniProtKB" id="Q8BYY4"/>
    </source>
</evidence>
<evidence type="ECO:0000303" key="2">
    <source>
    </source>
</evidence>
<evidence type="ECO:0000305" key="3"/>
<proteinExistence type="evidence at transcript level"/>
<keyword id="KW-0025">Alternative splicing</keyword>
<keyword id="KW-0443">Lipid metabolism</keyword>
<keyword id="KW-1185">Reference proteome</keyword>
<keyword id="KW-0677">Repeat</keyword>
<keyword id="KW-0802">TPR repeat</keyword>
<keyword id="KW-0833">Ubl conjugation pathway</keyword>
<sequence length="632" mass="72013">MLVSSHLERLLVFVFEFIFIEIGFPPCTPRPVSTSSKGVTIESSHSDMATSSLHFASCDTQQAPRQRGASTVNSSSSTKVDLKSGLEECAVALNLFLSNKFTDALELLRPWAKESMYHALGYSTIVVLQAVLTFEQQDIQNGISAMKDALQTCQKYRKKYTVVESFSSLLSRGSLEQLSEEEMHAEICYAECLLQKAALTFVQDENMINFIKGGLKIRTSYQIYKECLSILHEIQKNKLQQEFFYEFEGGVKLGTGAFNLMLSLLPARIIRLLEFIGFSGNRELGLLQLREGASGKSMRSALCCLTILAFHTYISLILGTGEVNVAEAERLLAPFLQQFPNGSLVLFYHARIELLKGNLEEAQEVFRKCVSVQEEWKQFHHLCYWELMWINVFQQNWMQAYYYSDLLCKESKWSKATYVFLKAAILSMLPEEDVVATNENVVTLFRQVDSLKQRIAGKSLPTEKFAVRKARRYSASLPAPVKLILPALEMMYVWNGFSIVSKRKDLSENLLVTVEKAEAALQSQNFNSFSVDDECLVKLLKGCCLKNLQRPLQAELCYNHVVESEKLLKYDHYLVPFTLFELASLYKSQGEIDKAIKFLETARNNYKDYSLESRLHFRIQAALHLWRKPSSD</sequence>
<dbReference type="EMBL" id="AB071091">
    <property type="protein sequence ID" value="BAB64485.1"/>
    <property type="molecule type" value="mRNA"/>
</dbReference>
<dbReference type="EMBL" id="AB071104">
    <property type="protein sequence ID" value="BAB64498.1"/>
    <property type="molecule type" value="mRNA"/>
</dbReference>
<dbReference type="EMBL" id="CM001290">
    <property type="protein sequence ID" value="EHH57386.1"/>
    <property type="molecule type" value="Genomic_DNA"/>
</dbReference>
<dbReference type="RefSeq" id="XP_005581745.1">
    <property type="nucleotide sequence ID" value="XM_005581688.2"/>
</dbReference>
<dbReference type="SMR" id="Q95LT8"/>
<dbReference type="STRING" id="9541.ENSMFAP00000005232"/>
<dbReference type="Ensembl" id="ENSMFAT00000023931.2">
    <molecule id="Q95LT8-2"/>
    <property type="protein sequence ID" value="ENSMFAP00000005258.2"/>
    <property type="gene ID" value="ENSMFAG00000002246.2"/>
</dbReference>
<dbReference type="eggNOG" id="KOG3783">
    <property type="taxonomic scope" value="Eukaryota"/>
</dbReference>
<dbReference type="GeneTree" id="ENSGT00950000182917"/>
<dbReference type="Proteomes" id="UP000009130">
    <property type="component" value="Chromosome 15"/>
</dbReference>
<dbReference type="Proteomes" id="UP000233100">
    <property type="component" value="Chromosome 15"/>
</dbReference>
<dbReference type="Bgee" id="ENSMFAG00000002246">
    <property type="expression patterns" value="Expressed in colon and 12 other cell types or tissues"/>
</dbReference>
<dbReference type="GO" id="GO:0042632">
    <property type="term" value="P:cholesterol homeostasis"/>
    <property type="evidence" value="ECO:0000250"/>
    <property type="project" value="UniProtKB"/>
</dbReference>
<dbReference type="GO" id="GO:0006629">
    <property type="term" value="P:lipid metabolic process"/>
    <property type="evidence" value="ECO:0007669"/>
    <property type="project" value="UniProtKB-KW"/>
</dbReference>
<dbReference type="GO" id="GO:0010887">
    <property type="term" value="P:negative regulation of cholesterol storage"/>
    <property type="evidence" value="ECO:0000250"/>
    <property type="project" value="UniProtKB"/>
</dbReference>
<dbReference type="GO" id="GO:0010874">
    <property type="term" value="P:regulation of cholesterol efflux"/>
    <property type="evidence" value="ECO:0000250"/>
    <property type="project" value="UniProtKB"/>
</dbReference>
<dbReference type="GO" id="GO:0090181">
    <property type="term" value="P:regulation of cholesterol metabolic process"/>
    <property type="evidence" value="ECO:0000250"/>
    <property type="project" value="UniProtKB"/>
</dbReference>
<dbReference type="FunFam" id="1.25.40.10:FF:000273">
    <property type="entry name" value="Tetratricopeptide repeat domain 39B"/>
    <property type="match status" value="1"/>
</dbReference>
<dbReference type="Gene3D" id="1.25.40.10">
    <property type="entry name" value="Tetratricopeptide repeat domain"/>
    <property type="match status" value="1"/>
</dbReference>
<dbReference type="InterPro" id="IPR019412">
    <property type="entry name" value="Iml2/TPR_39"/>
</dbReference>
<dbReference type="InterPro" id="IPR011990">
    <property type="entry name" value="TPR-like_helical_dom_sf"/>
</dbReference>
<dbReference type="InterPro" id="IPR019734">
    <property type="entry name" value="TPR_rpt"/>
</dbReference>
<dbReference type="PANTHER" id="PTHR31859">
    <property type="entry name" value="TETRATRICOPEPTIDE REPEAT PROTEIN 39 FAMILY MEMBER"/>
    <property type="match status" value="1"/>
</dbReference>
<dbReference type="PANTHER" id="PTHR31859:SF4">
    <property type="entry name" value="TETRATRICOPEPTIDE REPEAT PROTEIN 39B"/>
    <property type="match status" value="1"/>
</dbReference>
<dbReference type="Pfam" id="PF10300">
    <property type="entry name" value="Iml2-TPR_39"/>
    <property type="match status" value="1"/>
</dbReference>
<dbReference type="Pfam" id="PF13181">
    <property type="entry name" value="TPR_8"/>
    <property type="match status" value="1"/>
</dbReference>
<dbReference type="SMART" id="SM00028">
    <property type="entry name" value="TPR"/>
    <property type="match status" value="3"/>
</dbReference>
<dbReference type="SUPFAM" id="SSF81901">
    <property type="entry name" value="HCP-like"/>
    <property type="match status" value="1"/>
</dbReference>
<name>TT39B_MACFA</name>
<feature type="chain" id="PRO_0000292001" description="Tetratricopeptide repeat protein 39B">
    <location>
        <begin position="1"/>
        <end position="632"/>
    </location>
</feature>
<feature type="repeat" description="TPR 1">
    <location>
        <begin position="343"/>
        <end position="376"/>
    </location>
</feature>
<feature type="repeat" description="TPR 2">
    <location>
        <begin position="535"/>
        <end position="568"/>
    </location>
</feature>
<feature type="repeat" description="TPR 3">
    <location>
        <begin position="576"/>
        <end position="609"/>
    </location>
</feature>
<feature type="splice variant" id="VSP_026356" description="In isoform 2." evidence="2">
    <location>
        <begin position="1"/>
        <end position="47"/>
    </location>
</feature>
<feature type="splice variant" id="VSP_042804" description="In isoform 3." evidence="3">
    <original>MLVSSHLERLLVFVFEFIFIEIGFPPCTPRPVSTSSKGVTIE</original>
    <variation>MDAVWACRLRGRGNRVAALRPRPRRGGSARQSPFSLPCAGLSPEPRAGVGSEFPAWFLGGSSRRRNMALVGSRAELEADEDIFEDALETISI</variation>
    <location>
        <begin position="1"/>
        <end position="42"/>
    </location>
</feature>
<feature type="splice variant" id="VSP_042805" description="In isoform 3." evidence="3">
    <original>GSLVLFYHARIELLKGNLEE</original>
    <variation>VRLVFQS</variation>
    <location>
        <begin position="342"/>
        <end position="361"/>
    </location>
</feature>
<feature type="splice variant" id="VSP_026357" description="In isoform 2." evidence="2">
    <original>MMYVWNGFSIVSKRKDLSENLLVTVEKAEAALQSQ</original>
    <variation>FYQKPVFHKVSDMSLPPSDKKISSIKGIFKRSSSI</variation>
    <location>
        <begin position="490"/>
        <end position="524"/>
    </location>
</feature>
<feature type="splice variant" id="VSP_026358" description="In isoform 2." evidence="2">
    <location>
        <begin position="525"/>
        <end position="632"/>
    </location>
</feature>
<feature type="sequence conflict" description="In Ref. 1; BAB64485." evidence="3" ref="1">
    <original>M</original>
    <variation>V</variation>
    <location>
        <position position="388"/>
    </location>
</feature>
<reference key="1">
    <citation type="journal article" date="2002" name="BMC Genomics">
        <title>Cynomolgus monkey testicular cDNAs for discovery of novel human genes in the human genome sequence.</title>
        <authorList>
            <person name="Osada N."/>
            <person name="Hida M."/>
            <person name="Kusuda J."/>
            <person name="Tanuma R."/>
            <person name="Hirata M."/>
            <person name="Suto Y."/>
            <person name="Hirai M."/>
            <person name="Terao K."/>
            <person name="Sugano S."/>
            <person name="Hashimoto K."/>
        </authorList>
    </citation>
    <scope>NUCLEOTIDE SEQUENCE [LARGE SCALE MRNA] (ISOFORMS 1 AND 2)</scope>
    <source>
        <tissue>Testis</tissue>
    </source>
</reference>
<reference key="2">
    <citation type="journal article" date="2011" name="Nat. Biotechnol.">
        <title>Genome sequencing and comparison of two nonhuman primate animal models, the cynomolgus and Chinese rhesus macaques.</title>
        <authorList>
            <person name="Yan G."/>
            <person name="Zhang G."/>
            <person name="Fang X."/>
            <person name="Zhang Y."/>
            <person name="Li C."/>
            <person name="Ling F."/>
            <person name="Cooper D.N."/>
            <person name="Li Q."/>
            <person name="Li Y."/>
            <person name="van Gool A.J."/>
            <person name="Du H."/>
            <person name="Chen J."/>
            <person name="Chen R."/>
            <person name="Zhang P."/>
            <person name="Huang Z."/>
            <person name="Thompson J.R."/>
            <person name="Meng Y."/>
            <person name="Bai Y."/>
            <person name="Wang J."/>
            <person name="Zhuo M."/>
            <person name="Wang T."/>
            <person name="Huang Y."/>
            <person name="Wei L."/>
            <person name="Li J."/>
            <person name="Wang Z."/>
            <person name="Hu H."/>
            <person name="Yang P."/>
            <person name="Le L."/>
            <person name="Stenson P.D."/>
            <person name="Li B."/>
            <person name="Liu X."/>
            <person name="Ball E.V."/>
            <person name="An N."/>
            <person name="Huang Q."/>
            <person name="Zhang Y."/>
            <person name="Fan W."/>
            <person name="Zhang X."/>
            <person name="Li Y."/>
            <person name="Wang W."/>
            <person name="Katze M.G."/>
            <person name="Su B."/>
            <person name="Nielsen R."/>
            <person name="Yang H."/>
            <person name="Wang J."/>
            <person name="Wang X."/>
            <person name="Wang J."/>
        </authorList>
    </citation>
    <scope>NUCLEOTIDE SEQUENCE [LARGE SCALE GENOMIC DNA]</scope>
</reference>
<organism>
    <name type="scientific">Macaca fascicularis</name>
    <name type="common">Crab-eating macaque</name>
    <name type="synonym">Cynomolgus monkey</name>
    <dbReference type="NCBI Taxonomy" id="9541"/>
    <lineage>
        <taxon>Eukaryota</taxon>
        <taxon>Metazoa</taxon>
        <taxon>Chordata</taxon>
        <taxon>Craniata</taxon>
        <taxon>Vertebrata</taxon>
        <taxon>Euteleostomi</taxon>
        <taxon>Mammalia</taxon>
        <taxon>Eutheria</taxon>
        <taxon>Euarchontoglires</taxon>
        <taxon>Primates</taxon>
        <taxon>Haplorrhini</taxon>
        <taxon>Catarrhini</taxon>
        <taxon>Cercopithecidae</taxon>
        <taxon>Cercopithecinae</taxon>
        <taxon>Macaca</taxon>
    </lineage>
</organism>
<comment type="function">
    <text evidence="1">Regulates high density lipoprotein (HDL) cholesterol metabolism by promoting the ubiquitination and degradation of the oxysterols receptors LXR (NR1H2 and NR1H3).</text>
</comment>
<comment type="alternative products">
    <event type="alternative splicing"/>
    <isoform>
        <id>Q95LT8-1</id>
        <name>1</name>
        <sequence type="displayed"/>
    </isoform>
    <isoform>
        <id>Q95LT8-2</id>
        <name>2</name>
        <sequence type="described" ref="VSP_026356 VSP_026357 VSP_026358"/>
    </isoform>
    <isoform>
        <id>Q95LT8-3</id>
        <name>3</name>
        <sequence type="described" ref="VSP_042804 VSP_042805"/>
    </isoform>
</comment>
<comment type="similarity">
    <text evidence="3">Belongs to the TTC39 family.</text>
</comment>
<accession>Q95LT8</accession>
<accession>G7PSC0</accession>
<accession>Q95LV0</accession>